<dbReference type="EC" id="2.5.1.78" evidence="1"/>
<dbReference type="EMBL" id="CP000142">
    <property type="protein sequence ID" value="ABA88694.1"/>
    <property type="molecule type" value="Genomic_DNA"/>
</dbReference>
<dbReference type="RefSeq" id="WP_011341177.1">
    <property type="nucleotide sequence ID" value="NC_007498.2"/>
</dbReference>
<dbReference type="SMR" id="Q3A4L3"/>
<dbReference type="STRING" id="338963.Pcar_1448"/>
<dbReference type="KEGG" id="pca:Pcar_1448"/>
<dbReference type="eggNOG" id="COG0054">
    <property type="taxonomic scope" value="Bacteria"/>
</dbReference>
<dbReference type="HOGENOM" id="CLU_089358_1_1_7"/>
<dbReference type="OrthoDB" id="9809709at2"/>
<dbReference type="UniPathway" id="UPA00275">
    <property type="reaction ID" value="UER00404"/>
</dbReference>
<dbReference type="Proteomes" id="UP000002534">
    <property type="component" value="Chromosome"/>
</dbReference>
<dbReference type="GO" id="GO:0005829">
    <property type="term" value="C:cytosol"/>
    <property type="evidence" value="ECO:0007669"/>
    <property type="project" value="TreeGrafter"/>
</dbReference>
<dbReference type="GO" id="GO:0009349">
    <property type="term" value="C:riboflavin synthase complex"/>
    <property type="evidence" value="ECO:0007669"/>
    <property type="project" value="InterPro"/>
</dbReference>
<dbReference type="GO" id="GO:0000906">
    <property type="term" value="F:6,7-dimethyl-8-ribityllumazine synthase activity"/>
    <property type="evidence" value="ECO:0007669"/>
    <property type="project" value="UniProtKB-UniRule"/>
</dbReference>
<dbReference type="GO" id="GO:0009231">
    <property type="term" value="P:riboflavin biosynthetic process"/>
    <property type="evidence" value="ECO:0007669"/>
    <property type="project" value="UniProtKB-UniRule"/>
</dbReference>
<dbReference type="CDD" id="cd09209">
    <property type="entry name" value="Lumazine_synthase-I"/>
    <property type="match status" value="1"/>
</dbReference>
<dbReference type="FunFam" id="3.40.50.960:FF:000001">
    <property type="entry name" value="6,7-dimethyl-8-ribityllumazine synthase"/>
    <property type="match status" value="1"/>
</dbReference>
<dbReference type="Gene3D" id="3.40.50.960">
    <property type="entry name" value="Lumazine/riboflavin synthase"/>
    <property type="match status" value="1"/>
</dbReference>
<dbReference type="HAMAP" id="MF_00178">
    <property type="entry name" value="Lumazine_synth"/>
    <property type="match status" value="1"/>
</dbReference>
<dbReference type="InterPro" id="IPR034964">
    <property type="entry name" value="LS"/>
</dbReference>
<dbReference type="InterPro" id="IPR002180">
    <property type="entry name" value="LS/RS"/>
</dbReference>
<dbReference type="InterPro" id="IPR036467">
    <property type="entry name" value="LS/RS_sf"/>
</dbReference>
<dbReference type="NCBIfam" id="TIGR00114">
    <property type="entry name" value="lumazine-synth"/>
    <property type="match status" value="1"/>
</dbReference>
<dbReference type="NCBIfam" id="NF000812">
    <property type="entry name" value="PRK00061.1-4"/>
    <property type="match status" value="1"/>
</dbReference>
<dbReference type="PANTHER" id="PTHR21058:SF0">
    <property type="entry name" value="6,7-DIMETHYL-8-RIBITYLLUMAZINE SYNTHASE"/>
    <property type="match status" value="1"/>
</dbReference>
<dbReference type="PANTHER" id="PTHR21058">
    <property type="entry name" value="6,7-DIMETHYL-8-RIBITYLLUMAZINE SYNTHASE DMRL SYNTHASE LUMAZINE SYNTHASE"/>
    <property type="match status" value="1"/>
</dbReference>
<dbReference type="Pfam" id="PF00885">
    <property type="entry name" value="DMRL_synthase"/>
    <property type="match status" value="1"/>
</dbReference>
<dbReference type="SUPFAM" id="SSF52121">
    <property type="entry name" value="Lumazine synthase"/>
    <property type="match status" value="1"/>
</dbReference>
<organism>
    <name type="scientific">Syntrophotalea carbinolica (strain DSM 2380 / NBRC 103641 / GraBd1)</name>
    <name type="common">Pelobacter carbinolicus</name>
    <dbReference type="NCBI Taxonomy" id="338963"/>
    <lineage>
        <taxon>Bacteria</taxon>
        <taxon>Pseudomonadati</taxon>
        <taxon>Thermodesulfobacteriota</taxon>
        <taxon>Desulfuromonadia</taxon>
        <taxon>Desulfuromonadales</taxon>
        <taxon>Syntrophotaleaceae</taxon>
        <taxon>Syntrophotalea</taxon>
    </lineage>
</organism>
<sequence>MANIIEGKLNAEGFKFGIIVSRFNSFICDRLVEGALDTLVRHGAADGDIDILRVPGAFEIPVAAQKAAASKRYDALICLGAVIRGSTPHFDYVCAEVSKGVASVSLDSGMPVSFGVITTDSIEQAIERAGTKAGNKGTDAAITAIEMVNLFKVI</sequence>
<keyword id="KW-1185">Reference proteome</keyword>
<keyword id="KW-0686">Riboflavin biosynthesis</keyword>
<keyword id="KW-0808">Transferase</keyword>
<reference key="1">
    <citation type="submission" date="2005-10" db="EMBL/GenBank/DDBJ databases">
        <title>Complete sequence of Pelobacter carbinolicus DSM 2380.</title>
        <authorList>
            <person name="Copeland A."/>
            <person name="Lucas S."/>
            <person name="Lapidus A."/>
            <person name="Barry K."/>
            <person name="Detter J.C."/>
            <person name="Glavina T."/>
            <person name="Hammon N."/>
            <person name="Israni S."/>
            <person name="Pitluck S."/>
            <person name="Chertkov O."/>
            <person name="Schmutz J."/>
            <person name="Larimer F."/>
            <person name="Land M."/>
            <person name="Kyrpides N."/>
            <person name="Ivanova N."/>
            <person name="Richardson P."/>
        </authorList>
    </citation>
    <scope>NUCLEOTIDE SEQUENCE [LARGE SCALE GENOMIC DNA]</scope>
    <source>
        <strain>DSM 2380 / NBRC 103641 / GraBd1</strain>
    </source>
</reference>
<comment type="function">
    <text evidence="1">Catalyzes the formation of 6,7-dimethyl-8-ribityllumazine by condensation of 5-amino-6-(D-ribitylamino)uracil with 3,4-dihydroxy-2-butanone 4-phosphate. This is the penultimate step in the biosynthesis of riboflavin.</text>
</comment>
<comment type="catalytic activity">
    <reaction evidence="1">
        <text>(2S)-2-hydroxy-3-oxobutyl phosphate + 5-amino-6-(D-ribitylamino)uracil = 6,7-dimethyl-8-(1-D-ribityl)lumazine + phosphate + 2 H2O + H(+)</text>
        <dbReference type="Rhea" id="RHEA:26152"/>
        <dbReference type="ChEBI" id="CHEBI:15377"/>
        <dbReference type="ChEBI" id="CHEBI:15378"/>
        <dbReference type="ChEBI" id="CHEBI:15934"/>
        <dbReference type="ChEBI" id="CHEBI:43474"/>
        <dbReference type="ChEBI" id="CHEBI:58201"/>
        <dbReference type="ChEBI" id="CHEBI:58830"/>
        <dbReference type="EC" id="2.5.1.78"/>
    </reaction>
</comment>
<comment type="pathway">
    <text evidence="1">Cofactor biosynthesis; riboflavin biosynthesis; riboflavin from 2-hydroxy-3-oxobutyl phosphate and 5-amino-6-(D-ribitylamino)uracil: step 1/2.</text>
</comment>
<comment type="similarity">
    <text evidence="1">Belongs to the DMRL synthase family.</text>
</comment>
<feature type="chain" id="PRO_1000040472" description="6,7-dimethyl-8-ribityllumazine synthase">
    <location>
        <begin position="1"/>
        <end position="154"/>
    </location>
</feature>
<feature type="active site" description="Proton donor" evidence="1">
    <location>
        <position position="89"/>
    </location>
</feature>
<feature type="binding site" evidence="1">
    <location>
        <position position="23"/>
    </location>
    <ligand>
        <name>5-amino-6-(D-ribitylamino)uracil</name>
        <dbReference type="ChEBI" id="CHEBI:15934"/>
    </ligand>
</feature>
<feature type="binding site" evidence="1">
    <location>
        <begin position="57"/>
        <end position="59"/>
    </location>
    <ligand>
        <name>5-amino-6-(D-ribitylamino)uracil</name>
        <dbReference type="ChEBI" id="CHEBI:15934"/>
    </ligand>
</feature>
<feature type="binding site" evidence="1">
    <location>
        <begin position="81"/>
        <end position="83"/>
    </location>
    <ligand>
        <name>5-amino-6-(D-ribitylamino)uracil</name>
        <dbReference type="ChEBI" id="CHEBI:15934"/>
    </ligand>
</feature>
<feature type="binding site" evidence="1">
    <location>
        <begin position="86"/>
        <end position="87"/>
    </location>
    <ligand>
        <name>(2S)-2-hydroxy-3-oxobutyl phosphate</name>
        <dbReference type="ChEBI" id="CHEBI:58830"/>
    </ligand>
</feature>
<feature type="binding site" evidence="1">
    <location>
        <position position="114"/>
    </location>
    <ligand>
        <name>5-amino-6-(D-ribitylamino)uracil</name>
        <dbReference type="ChEBI" id="CHEBI:15934"/>
    </ligand>
</feature>
<feature type="binding site" evidence="1">
    <location>
        <position position="128"/>
    </location>
    <ligand>
        <name>(2S)-2-hydroxy-3-oxobutyl phosphate</name>
        <dbReference type="ChEBI" id="CHEBI:58830"/>
    </ligand>
</feature>
<gene>
    <name evidence="1" type="primary">ribH</name>
    <name type="ordered locus">Pcar_1448</name>
</gene>
<proteinExistence type="inferred from homology"/>
<protein>
    <recommendedName>
        <fullName evidence="1">6,7-dimethyl-8-ribityllumazine synthase</fullName>
        <shortName evidence="1">DMRL synthase</shortName>
        <shortName evidence="1">LS</shortName>
        <shortName evidence="1">Lumazine synthase</shortName>
        <ecNumber evidence="1">2.5.1.78</ecNumber>
    </recommendedName>
</protein>
<accession>Q3A4L3</accession>
<name>RISB_SYNC1</name>
<evidence type="ECO:0000255" key="1">
    <source>
        <dbReference type="HAMAP-Rule" id="MF_00178"/>
    </source>
</evidence>